<keyword id="KW-0067">ATP-binding</keyword>
<keyword id="KW-0963">Cytoplasm</keyword>
<keyword id="KW-0418">Kinase</keyword>
<keyword id="KW-0547">Nucleotide-binding</keyword>
<keyword id="KW-1185">Reference proteome</keyword>
<keyword id="KW-0808">Transferase</keyword>
<comment type="catalytic activity">
    <reaction evidence="1">
        <text>uridine + ATP = UMP + ADP + H(+)</text>
        <dbReference type="Rhea" id="RHEA:16825"/>
        <dbReference type="ChEBI" id="CHEBI:15378"/>
        <dbReference type="ChEBI" id="CHEBI:16704"/>
        <dbReference type="ChEBI" id="CHEBI:30616"/>
        <dbReference type="ChEBI" id="CHEBI:57865"/>
        <dbReference type="ChEBI" id="CHEBI:456216"/>
        <dbReference type="EC" id="2.7.1.48"/>
    </reaction>
</comment>
<comment type="catalytic activity">
    <reaction evidence="1">
        <text>cytidine + ATP = CMP + ADP + H(+)</text>
        <dbReference type="Rhea" id="RHEA:24674"/>
        <dbReference type="ChEBI" id="CHEBI:15378"/>
        <dbReference type="ChEBI" id="CHEBI:17562"/>
        <dbReference type="ChEBI" id="CHEBI:30616"/>
        <dbReference type="ChEBI" id="CHEBI:60377"/>
        <dbReference type="ChEBI" id="CHEBI:456216"/>
        <dbReference type="EC" id="2.7.1.48"/>
    </reaction>
</comment>
<comment type="pathway">
    <text evidence="1">Pyrimidine metabolism; CTP biosynthesis via salvage pathway; CTP from cytidine: step 1/3.</text>
</comment>
<comment type="pathway">
    <text evidence="1">Pyrimidine metabolism; UMP biosynthesis via salvage pathway; UMP from uridine: step 1/1.</text>
</comment>
<comment type="subcellular location">
    <subcellularLocation>
        <location evidence="1">Cytoplasm</location>
    </subcellularLocation>
</comment>
<comment type="similarity">
    <text evidence="1">Belongs to the uridine kinase family.</text>
</comment>
<reference key="1">
    <citation type="book" date="2006" name="Gram positive pathogens, 2nd edition">
        <title>The Staphylococcus aureus NCTC 8325 genome.</title>
        <editorList>
            <person name="Fischetti V."/>
            <person name="Novick R."/>
            <person name="Ferretti J."/>
            <person name="Portnoy D."/>
            <person name="Rood J."/>
        </editorList>
        <authorList>
            <person name="Gillaspy A.F."/>
            <person name="Worrell V."/>
            <person name="Orvis J."/>
            <person name="Roe B.A."/>
            <person name="Dyer D.W."/>
            <person name="Iandolo J.J."/>
        </authorList>
    </citation>
    <scope>NUCLEOTIDE SEQUENCE [LARGE SCALE GENOMIC DNA]</scope>
    <source>
        <strain>NCTC 8325 / PS 47</strain>
    </source>
</reference>
<feature type="chain" id="PRO_1000017903" description="Uridine kinase">
    <location>
        <begin position="1"/>
        <end position="207"/>
    </location>
</feature>
<feature type="binding site" evidence="1">
    <location>
        <begin position="11"/>
        <end position="18"/>
    </location>
    <ligand>
        <name>ATP</name>
        <dbReference type="ChEBI" id="CHEBI:30616"/>
    </ligand>
</feature>
<evidence type="ECO:0000255" key="1">
    <source>
        <dbReference type="HAMAP-Rule" id="MF_00551"/>
    </source>
</evidence>
<name>URK_STAA8</name>
<sequence length="207" mass="23505">MKATTIIGIAGGSGSGKTTVTNEIMKNLEGHSVALLAQDYYYKDQKHLTFDERLETNYDHPFAFDNDLLIENLKDLKNGKAVEVPTYDYASHTRSDITIDFKPKDVIIVEGIFALENKVLRDMMDVKIYVDTDADLRILRRLTRDTKERGRSMDSVINQYLSVVRPMHDQFIEPTKKYADIIIPEGGSNKVAIDIMTTKIQSLVSKQ</sequence>
<gene>
    <name evidence="1" type="primary">udk</name>
    <name type="ordered locus">SAOUHSC_01715</name>
</gene>
<organism>
    <name type="scientific">Staphylococcus aureus (strain NCTC 8325 / PS 47)</name>
    <dbReference type="NCBI Taxonomy" id="93061"/>
    <lineage>
        <taxon>Bacteria</taxon>
        <taxon>Bacillati</taxon>
        <taxon>Bacillota</taxon>
        <taxon>Bacilli</taxon>
        <taxon>Bacillales</taxon>
        <taxon>Staphylococcaceae</taxon>
        <taxon>Staphylococcus</taxon>
    </lineage>
</organism>
<proteinExistence type="inferred from homology"/>
<accession>Q2FXW6</accession>
<protein>
    <recommendedName>
        <fullName evidence="1">Uridine kinase</fullName>
        <ecNumber evidence="1">2.7.1.48</ecNumber>
    </recommendedName>
    <alternativeName>
        <fullName evidence="1">Cytidine monophosphokinase</fullName>
    </alternativeName>
    <alternativeName>
        <fullName evidence="1">Uridine monophosphokinase</fullName>
    </alternativeName>
</protein>
<dbReference type="EC" id="2.7.1.48" evidence="1"/>
<dbReference type="EMBL" id="CP000253">
    <property type="protein sequence ID" value="ABD30788.1"/>
    <property type="molecule type" value="Genomic_DNA"/>
</dbReference>
<dbReference type="RefSeq" id="WP_000648617.1">
    <property type="nucleotide sequence ID" value="NZ_LS483365.1"/>
</dbReference>
<dbReference type="RefSeq" id="YP_500224.1">
    <property type="nucleotide sequence ID" value="NC_007795.1"/>
</dbReference>
<dbReference type="SMR" id="Q2FXW6"/>
<dbReference type="STRING" id="93061.SAOUHSC_01715"/>
<dbReference type="PaxDb" id="1280-SAXN108_1639"/>
<dbReference type="GeneID" id="3921104"/>
<dbReference type="KEGG" id="sao:SAOUHSC_01715"/>
<dbReference type="PATRIC" id="fig|93061.5.peg.1563"/>
<dbReference type="eggNOG" id="COG0572">
    <property type="taxonomic scope" value="Bacteria"/>
</dbReference>
<dbReference type="HOGENOM" id="CLU_021278_1_2_9"/>
<dbReference type="OrthoDB" id="9777642at2"/>
<dbReference type="UniPathway" id="UPA00574">
    <property type="reaction ID" value="UER00637"/>
</dbReference>
<dbReference type="UniPathway" id="UPA00579">
    <property type="reaction ID" value="UER00640"/>
</dbReference>
<dbReference type="PRO" id="PR:Q2FXW6"/>
<dbReference type="Proteomes" id="UP000008816">
    <property type="component" value="Chromosome"/>
</dbReference>
<dbReference type="GO" id="GO:0005737">
    <property type="term" value="C:cytoplasm"/>
    <property type="evidence" value="ECO:0000318"/>
    <property type="project" value="GO_Central"/>
</dbReference>
<dbReference type="GO" id="GO:0005524">
    <property type="term" value="F:ATP binding"/>
    <property type="evidence" value="ECO:0007669"/>
    <property type="project" value="UniProtKB-UniRule"/>
</dbReference>
<dbReference type="GO" id="GO:0043771">
    <property type="term" value="F:cytidine kinase activity"/>
    <property type="evidence" value="ECO:0007669"/>
    <property type="project" value="RHEA"/>
</dbReference>
<dbReference type="GO" id="GO:0004849">
    <property type="term" value="F:uridine kinase activity"/>
    <property type="evidence" value="ECO:0007669"/>
    <property type="project" value="UniProtKB-UniRule"/>
</dbReference>
<dbReference type="GO" id="GO:0044211">
    <property type="term" value="P:CTP salvage"/>
    <property type="evidence" value="ECO:0007669"/>
    <property type="project" value="UniProtKB-UniRule"/>
</dbReference>
<dbReference type="GO" id="GO:0044206">
    <property type="term" value="P:UMP salvage"/>
    <property type="evidence" value="ECO:0007669"/>
    <property type="project" value="UniProtKB-UniRule"/>
</dbReference>
<dbReference type="CDD" id="cd02023">
    <property type="entry name" value="UMPK"/>
    <property type="match status" value="1"/>
</dbReference>
<dbReference type="Gene3D" id="3.40.50.300">
    <property type="entry name" value="P-loop containing nucleotide triphosphate hydrolases"/>
    <property type="match status" value="1"/>
</dbReference>
<dbReference type="HAMAP" id="MF_00551">
    <property type="entry name" value="Uridine_kinase"/>
    <property type="match status" value="1"/>
</dbReference>
<dbReference type="InterPro" id="IPR027417">
    <property type="entry name" value="P-loop_NTPase"/>
</dbReference>
<dbReference type="InterPro" id="IPR006083">
    <property type="entry name" value="PRK/URK"/>
</dbReference>
<dbReference type="InterPro" id="IPR026008">
    <property type="entry name" value="Uridine_kinase"/>
</dbReference>
<dbReference type="InterPro" id="IPR000764">
    <property type="entry name" value="Uridine_kinase-like"/>
</dbReference>
<dbReference type="NCBIfam" id="NF004018">
    <property type="entry name" value="PRK05480.1"/>
    <property type="match status" value="1"/>
</dbReference>
<dbReference type="NCBIfam" id="TIGR00235">
    <property type="entry name" value="udk"/>
    <property type="match status" value="1"/>
</dbReference>
<dbReference type="PANTHER" id="PTHR10285">
    <property type="entry name" value="URIDINE KINASE"/>
    <property type="match status" value="1"/>
</dbReference>
<dbReference type="Pfam" id="PF00485">
    <property type="entry name" value="PRK"/>
    <property type="match status" value="1"/>
</dbReference>
<dbReference type="PRINTS" id="PR00988">
    <property type="entry name" value="URIDINKINASE"/>
</dbReference>
<dbReference type="SUPFAM" id="SSF52540">
    <property type="entry name" value="P-loop containing nucleoside triphosphate hydrolases"/>
    <property type="match status" value="1"/>
</dbReference>